<proteinExistence type="evidence at transcript level"/>
<sequence length="384" mass="44447">MLSINTTRKENELSGNLGKMKITEENKPKKVLGEITNFQRSTQKTPLKQEIKPVVKKSQQVEPLLADNPRRFVVLPIQYHDIWKMYKKAEASFWTAEEVDLSKDMAHWESLKKEEKHFISHVLAFFAASDGIVNENLVERFSKEVQVTEARCFYGFQIAMENIHSEMYSLLIDTYIKDPQERDFLFNAIETMPCVKEKADWAMRWINDDSSSYAERVVAFAAVEGIFFSGSFASIFWLKKRGIMPGLTFSNELISRDEGLHCDFACLMFSHLVNKPSQERIHQIIDEAVKIEQVFLTEALPCRLIGMNCDLMRQYIEFVADRLLLELKCDKLYNKENPFDFMEHISLEGKTNFFEKRVGEYQKMGVMSGGNTGDSHAFTLDADF</sequence>
<accession>P07201</accession>
<organism>
    <name type="scientific">Spisula solidissima</name>
    <name type="common">Atlantic surf-clam</name>
    <dbReference type="NCBI Taxonomy" id="6584"/>
    <lineage>
        <taxon>Eukaryota</taxon>
        <taxon>Metazoa</taxon>
        <taxon>Spiralia</taxon>
        <taxon>Lophotrochozoa</taxon>
        <taxon>Mollusca</taxon>
        <taxon>Bivalvia</taxon>
        <taxon>Autobranchia</taxon>
        <taxon>Heteroconchia</taxon>
        <taxon>Euheterodonta</taxon>
        <taxon>Imparidentia</taxon>
        <taxon>Neoheterodontei</taxon>
        <taxon>Venerida</taxon>
        <taxon>Mactroidea</taxon>
        <taxon>Mactridae</taxon>
        <taxon>Spisula</taxon>
    </lineage>
</organism>
<name>RIR2_SPISO</name>
<comment type="function">
    <text>Provides the precursors necessary for DNA synthesis. Catalyzes the biosynthesis of deoxyribonucleotides from the corresponding ribonucleotides.</text>
</comment>
<comment type="catalytic activity">
    <reaction evidence="2">
        <text>a 2'-deoxyribonucleoside 5'-diphosphate + [thioredoxin]-disulfide + H2O = a ribonucleoside 5'-diphosphate + [thioredoxin]-dithiol</text>
        <dbReference type="Rhea" id="RHEA:23252"/>
        <dbReference type="Rhea" id="RHEA-COMP:10698"/>
        <dbReference type="Rhea" id="RHEA-COMP:10700"/>
        <dbReference type="ChEBI" id="CHEBI:15377"/>
        <dbReference type="ChEBI" id="CHEBI:29950"/>
        <dbReference type="ChEBI" id="CHEBI:50058"/>
        <dbReference type="ChEBI" id="CHEBI:57930"/>
        <dbReference type="ChEBI" id="CHEBI:73316"/>
        <dbReference type="EC" id="1.17.4.1"/>
    </reaction>
</comment>
<comment type="cofactor">
    <cofactor evidence="1">
        <name>Fe cation</name>
        <dbReference type="ChEBI" id="CHEBI:24875"/>
    </cofactor>
    <text evidence="1">Binds 2 iron ions per subunit.</text>
</comment>
<comment type="subunit">
    <text>Heterodimer of a large and a small subunit.</text>
</comment>
<comment type="miscellaneous">
    <text>There is no sign of synthesis of a corresponding large subunit after fertilization. The authors suspect that the unfertilized oocytes contain a stockpile of large subunits ready for combination with newly made small subunits.</text>
</comment>
<comment type="similarity">
    <text evidence="3">Belongs to the ribonucleoside diphosphate reductase small chain family.</text>
</comment>
<evidence type="ECO:0000250" key="1"/>
<evidence type="ECO:0000255" key="2">
    <source>
        <dbReference type="PROSITE-ProRule" id="PRU10014"/>
    </source>
</evidence>
<evidence type="ECO:0000305" key="3"/>
<dbReference type="EC" id="1.17.4.1"/>
<dbReference type="EMBL" id="X55125">
    <property type="protein sequence ID" value="CAA38919.1"/>
    <property type="molecule type" value="mRNA"/>
</dbReference>
<dbReference type="EMBL" id="X02471">
    <property type="protein sequence ID" value="CAA26307.1"/>
    <property type="molecule type" value="mRNA"/>
</dbReference>
<dbReference type="PIR" id="A22259">
    <property type="entry name" value="RDSS2R"/>
</dbReference>
<dbReference type="PIR" id="S24585">
    <property type="entry name" value="S24585"/>
</dbReference>
<dbReference type="SMR" id="P07201"/>
<dbReference type="GO" id="GO:0005829">
    <property type="term" value="C:cytosol"/>
    <property type="evidence" value="ECO:0007669"/>
    <property type="project" value="TreeGrafter"/>
</dbReference>
<dbReference type="GO" id="GO:0046872">
    <property type="term" value="F:metal ion binding"/>
    <property type="evidence" value="ECO:0007669"/>
    <property type="project" value="UniProtKB-KW"/>
</dbReference>
<dbReference type="GO" id="GO:0004748">
    <property type="term" value="F:ribonucleoside-diphosphate reductase activity, thioredoxin disulfide as acceptor"/>
    <property type="evidence" value="ECO:0007669"/>
    <property type="project" value="UniProtKB-EC"/>
</dbReference>
<dbReference type="GO" id="GO:0009263">
    <property type="term" value="P:deoxyribonucleotide biosynthetic process"/>
    <property type="evidence" value="ECO:0007669"/>
    <property type="project" value="UniProtKB-KW"/>
</dbReference>
<dbReference type="CDD" id="cd01049">
    <property type="entry name" value="RNRR2"/>
    <property type="match status" value="1"/>
</dbReference>
<dbReference type="FunFam" id="1.10.620.20:FF:000004">
    <property type="entry name" value="Ribonucleoside-diphosphate reductase subunit M2 B"/>
    <property type="match status" value="1"/>
</dbReference>
<dbReference type="Gene3D" id="1.10.620.20">
    <property type="entry name" value="Ribonucleotide Reductase, subunit A"/>
    <property type="match status" value="1"/>
</dbReference>
<dbReference type="InterPro" id="IPR009078">
    <property type="entry name" value="Ferritin-like_SF"/>
</dbReference>
<dbReference type="InterPro" id="IPR012348">
    <property type="entry name" value="RNR-like"/>
</dbReference>
<dbReference type="InterPro" id="IPR033909">
    <property type="entry name" value="RNR_small"/>
</dbReference>
<dbReference type="InterPro" id="IPR030475">
    <property type="entry name" value="RNR_small_AS"/>
</dbReference>
<dbReference type="InterPro" id="IPR000358">
    <property type="entry name" value="RNR_small_fam"/>
</dbReference>
<dbReference type="PANTHER" id="PTHR23409">
    <property type="entry name" value="RIBONUCLEOSIDE-DIPHOSPHATE REDUCTASE SMALL CHAIN"/>
    <property type="match status" value="1"/>
</dbReference>
<dbReference type="PANTHER" id="PTHR23409:SF18">
    <property type="entry name" value="RIBONUCLEOSIDE-DIPHOSPHATE REDUCTASE SUBUNIT M2"/>
    <property type="match status" value="1"/>
</dbReference>
<dbReference type="Pfam" id="PF00268">
    <property type="entry name" value="Ribonuc_red_sm"/>
    <property type="match status" value="1"/>
</dbReference>
<dbReference type="SUPFAM" id="SSF47240">
    <property type="entry name" value="Ferritin-like"/>
    <property type="match status" value="1"/>
</dbReference>
<dbReference type="PROSITE" id="PS00368">
    <property type="entry name" value="RIBORED_SMALL"/>
    <property type="match status" value="1"/>
</dbReference>
<feature type="chain" id="PRO_0000190453" description="Ribonucleoside-diphosphate reductase small chain">
    <location>
        <begin position="1"/>
        <end position="384"/>
    </location>
</feature>
<feature type="active site" evidence="2">
    <location>
        <position position="168"/>
    </location>
</feature>
<feature type="binding site" evidence="2">
    <location>
        <position position="130"/>
    </location>
    <ligand>
        <name>Fe cation</name>
        <dbReference type="ChEBI" id="CHEBI:24875"/>
        <label>1</label>
    </ligand>
</feature>
<feature type="binding site" evidence="2">
    <location>
        <position position="161"/>
    </location>
    <ligand>
        <name>Fe cation</name>
        <dbReference type="ChEBI" id="CHEBI:24875"/>
        <label>1</label>
    </ligand>
</feature>
<feature type="binding site" evidence="1">
    <location>
        <position position="161"/>
    </location>
    <ligand>
        <name>Fe cation</name>
        <dbReference type="ChEBI" id="CHEBI:24875"/>
        <label>2</label>
    </ligand>
</feature>
<feature type="binding site" evidence="2">
    <location>
        <position position="164"/>
    </location>
    <ligand>
        <name>Fe cation</name>
        <dbReference type="ChEBI" id="CHEBI:24875"/>
        <label>1</label>
    </ligand>
</feature>
<feature type="binding site" evidence="1">
    <location>
        <position position="224"/>
    </location>
    <ligand>
        <name>Fe cation</name>
        <dbReference type="ChEBI" id="CHEBI:24875"/>
        <label>2</label>
    </ligand>
</feature>
<feature type="binding site" evidence="1">
    <location>
        <position position="258"/>
    </location>
    <ligand>
        <name>Fe cation</name>
        <dbReference type="ChEBI" id="CHEBI:24875"/>
        <label>2</label>
    </ligand>
</feature>
<feature type="binding site" evidence="1">
    <location>
        <position position="261"/>
    </location>
    <ligand>
        <name>Fe cation</name>
        <dbReference type="ChEBI" id="CHEBI:24875"/>
        <label>2</label>
    </ligand>
</feature>
<protein>
    <recommendedName>
        <fullName>Ribonucleoside-diphosphate reductase small chain</fullName>
        <ecNumber>1.17.4.1</ecNumber>
    </recommendedName>
    <alternativeName>
        <fullName>Ribonucleotide reductase small subunit</fullName>
    </alternativeName>
    <alternativeName>
        <fullName>p41</fullName>
    </alternativeName>
</protein>
<keyword id="KW-0215">Deoxyribonucleotide synthesis</keyword>
<keyword id="KW-0408">Iron</keyword>
<keyword id="KW-0479">Metal-binding</keyword>
<keyword id="KW-0560">Oxidoreductase</keyword>
<reference key="1">
    <citation type="journal article" date="1990" name="Genes Dev.">
        <title>Maternal mRNA from clam oocytes can be specifically unmasked in vitro by antisense RNA complementary to the 3'-untranslated region.</title>
        <authorList>
            <person name="Standart N.M."/>
            <person name="Dale M."/>
            <person name="Stewart E."/>
            <person name="Hunt T."/>
        </authorList>
    </citation>
    <scope>NUCLEOTIDE SEQUENCE [MRNA]</scope>
</reference>
<reference key="2">
    <citation type="journal article" date="1985" name="J. Cell Biol.">
        <title>The small subunit of ribonucleotide reductase is encoded by one of the most abundant translationally regulated maternal RNAs in clam and sea urchin eggs.</title>
        <authorList>
            <person name="Standart N.M."/>
            <person name="Bray S.J."/>
            <person name="George E.L."/>
            <person name="Hunt T."/>
            <person name="Ruderman J.V."/>
        </authorList>
    </citation>
    <scope>NUCLEOTIDE SEQUENCE [MRNA] OF 85-384</scope>
</reference>